<evidence type="ECO:0000250" key="1"/>
<evidence type="ECO:0000255" key="2">
    <source>
        <dbReference type="PROSITE-ProRule" id="PRU00625"/>
    </source>
</evidence>
<evidence type="ECO:0000269" key="3">
    <source ref="1"/>
</evidence>
<evidence type="ECO:0000305" key="4"/>
<gene>
    <name type="primary">MYB86</name>
    <name type="synonym">MYB4</name>
    <name type="ordered locus">At5g26660</name>
    <name type="ORF">F21E10.4</name>
</gene>
<reference key="1">
    <citation type="online journal article" date="1998" name="Plant Gene Register">
        <title>Molecular cloning of two cDNAs encoding novel myb homologs from Arabidopsis.</title>
        <authorList>
            <person name="Noji M."/>
            <person name="Urao T."/>
            <person name="Shinozaki K.-Y."/>
            <person name="Shinozaki K."/>
        </authorList>
        <locator>PGR98-111</locator>
    </citation>
    <scope>NUCLEOTIDE SEQUENCE [MRNA]</scope>
    <scope>TISSUE SPECIFICITY</scope>
    <source>
        <strain>cv. Columbia</strain>
        <tissue>Rosette leaf</tissue>
    </source>
</reference>
<reference key="2">
    <citation type="journal article" date="2000" name="Nature">
        <title>Sequence and analysis of chromosome 5 of the plant Arabidopsis thaliana.</title>
        <authorList>
            <person name="Tabata S."/>
            <person name="Kaneko T."/>
            <person name="Nakamura Y."/>
            <person name="Kotani H."/>
            <person name="Kato T."/>
            <person name="Asamizu E."/>
            <person name="Miyajima N."/>
            <person name="Sasamoto S."/>
            <person name="Kimura T."/>
            <person name="Hosouchi T."/>
            <person name="Kawashima K."/>
            <person name="Kohara M."/>
            <person name="Matsumoto M."/>
            <person name="Matsuno A."/>
            <person name="Muraki A."/>
            <person name="Nakayama S."/>
            <person name="Nakazaki N."/>
            <person name="Naruo K."/>
            <person name="Okumura S."/>
            <person name="Shinpo S."/>
            <person name="Takeuchi C."/>
            <person name="Wada T."/>
            <person name="Watanabe A."/>
            <person name="Yamada M."/>
            <person name="Yasuda M."/>
            <person name="Sato S."/>
            <person name="de la Bastide M."/>
            <person name="Huang E."/>
            <person name="Spiegel L."/>
            <person name="Gnoj L."/>
            <person name="O'Shaughnessy A."/>
            <person name="Preston R."/>
            <person name="Habermann K."/>
            <person name="Murray J."/>
            <person name="Johnson D."/>
            <person name="Rohlfing T."/>
            <person name="Nelson J."/>
            <person name="Stoneking T."/>
            <person name="Pepin K."/>
            <person name="Spieth J."/>
            <person name="Sekhon M."/>
            <person name="Armstrong J."/>
            <person name="Becker M."/>
            <person name="Belter E."/>
            <person name="Cordum H."/>
            <person name="Cordes M."/>
            <person name="Courtney L."/>
            <person name="Courtney W."/>
            <person name="Dante M."/>
            <person name="Du H."/>
            <person name="Edwards J."/>
            <person name="Fryman J."/>
            <person name="Haakensen B."/>
            <person name="Lamar E."/>
            <person name="Latreille P."/>
            <person name="Leonard S."/>
            <person name="Meyer R."/>
            <person name="Mulvaney E."/>
            <person name="Ozersky P."/>
            <person name="Riley A."/>
            <person name="Strowmatt C."/>
            <person name="Wagner-McPherson C."/>
            <person name="Wollam A."/>
            <person name="Yoakum M."/>
            <person name="Bell M."/>
            <person name="Dedhia N."/>
            <person name="Parnell L."/>
            <person name="Shah R."/>
            <person name="Rodriguez M."/>
            <person name="Hoon See L."/>
            <person name="Vil D."/>
            <person name="Baker J."/>
            <person name="Kirchoff K."/>
            <person name="Toth K."/>
            <person name="King L."/>
            <person name="Bahret A."/>
            <person name="Miller B."/>
            <person name="Marra M.A."/>
            <person name="Martienssen R."/>
            <person name="McCombie W.R."/>
            <person name="Wilson R.K."/>
            <person name="Murphy G."/>
            <person name="Bancroft I."/>
            <person name="Volckaert G."/>
            <person name="Wambutt R."/>
            <person name="Duesterhoeft A."/>
            <person name="Stiekema W."/>
            <person name="Pohl T."/>
            <person name="Entian K.-D."/>
            <person name="Terryn N."/>
            <person name="Hartley N."/>
            <person name="Bent E."/>
            <person name="Johnson S."/>
            <person name="Langham S.-A."/>
            <person name="McCullagh B."/>
            <person name="Robben J."/>
            <person name="Grymonprez B."/>
            <person name="Zimmermann W."/>
            <person name="Ramsperger U."/>
            <person name="Wedler H."/>
            <person name="Balke K."/>
            <person name="Wedler E."/>
            <person name="Peters S."/>
            <person name="van Staveren M."/>
            <person name="Dirkse W."/>
            <person name="Mooijman P."/>
            <person name="Klein Lankhorst R."/>
            <person name="Weitzenegger T."/>
            <person name="Bothe G."/>
            <person name="Rose M."/>
            <person name="Hauf J."/>
            <person name="Berneiser S."/>
            <person name="Hempel S."/>
            <person name="Feldpausch M."/>
            <person name="Lamberth S."/>
            <person name="Villarroel R."/>
            <person name="Gielen J."/>
            <person name="Ardiles W."/>
            <person name="Bents O."/>
            <person name="Lemcke K."/>
            <person name="Kolesov G."/>
            <person name="Mayer K.F.X."/>
            <person name="Rudd S."/>
            <person name="Schoof H."/>
            <person name="Schueller C."/>
            <person name="Zaccaria P."/>
            <person name="Mewes H.-W."/>
            <person name="Bevan M."/>
            <person name="Fransz P.F."/>
        </authorList>
    </citation>
    <scope>NUCLEOTIDE SEQUENCE [LARGE SCALE GENOMIC DNA]</scope>
    <source>
        <strain>cv. Columbia</strain>
    </source>
</reference>
<reference key="3">
    <citation type="journal article" date="2017" name="Plant J.">
        <title>Araport11: a complete reannotation of the Arabidopsis thaliana reference genome.</title>
        <authorList>
            <person name="Cheng C.Y."/>
            <person name="Krishnakumar V."/>
            <person name="Chan A.P."/>
            <person name="Thibaud-Nissen F."/>
            <person name="Schobel S."/>
            <person name="Town C.D."/>
        </authorList>
    </citation>
    <scope>GENOME REANNOTATION</scope>
    <source>
        <strain>cv. Columbia</strain>
    </source>
</reference>
<reference key="4">
    <citation type="journal article" date="2004" name="Plant Physiol.">
        <title>Genome-wide ORFeome cloning and analysis of Arabidopsis transcription factor genes.</title>
        <authorList>
            <person name="Gong W."/>
            <person name="Shen Y.-P."/>
            <person name="Ma L.-G."/>
            <person name="Pan Y."/>
            <person name="Du Y.-L."/>
            <person name="Wang D.-H."/>
            <person name="Yang J.-Y."/>
            <person name="Hu L.-D."/>
            <person name="Liu X.-F."/>
            <person name="Dong C.-X."/>
            <person name="Ma L."/>
            <person name="Chen Y.-H."/>
            <person name="Yang X.-Y."/>
            <person name="Gao Y."/>
            <person name="Zhu D."/>
            <person name="Tan X."/>
            <person name="Mu J.-Y."/>
            <person name="Zhang D.-B."/>
            <person name="Liu Y.-L."/>
            <person name="Dinesh-Kumar S.P."/>
            <person name="Li Y."/>
            <person name="Wang X.-P."/>
            <person name="Gu H.-Y."/>
            <person name="Qu L.-J."/>
            <person name="Bai S.-N."/>
            <person name="Lu Y.-T."/>
            <person name="Li J.-Y."/>
            <person name="Zhao J.-D."/>
            <person name="Zuo J."/>
            <person name="Huang H."/>
            <person name="Deng X.-W."/>
            <person name="Zhu Y.-X."/>
        </authorList>
    </citation>
    <scope>NUCLEOTIDE SEQUENCE [LARGE SCALE MRNA]</scope>
    <source>
        <strain>cv. Columbia</strain>
    </source>
</reference>
<reference key="5">
    <citation type="journal article" date="2003" name="Science">
        <title>Empirical analysis of transcriptional activity in the Arabidopsis genome.</title>
        <authorList>
            <person name="Yamada K."/>
            <person name="Lim J."/>
            <person name="Dale J.M."/>
            <person name="Chen H."/>
            <person name="Shinn P."/>
            <person name="Palm C.J."/>
            <person name="Southwick A.M."/>
            <person name="Wu H.C."/>
            <person name="Kim C.J."/>
            <person name="Nguyen M."/>
            <person name="Pham P.K."/>
            <person name="Cheuk R.F."/>
            <person name="Karlin-Newmann G."/>
            <person name="Liu S.X."/>
            <person name="Lam B."/>
            <person name="Sakano H."/>
            <person name="Wu T."/>
            <person name="Yu G."/>
            <person name="Miranda M."/>
            <person name="Quach H.L."/>
            <person name="Tripp M."/>
            <person name="Chang C.H."/>
            <person name="Lee J.M."/>
            <person name="Toriumi M.J."/>
            <person name="Chan M.M."/>
            <person name="Tang C.C."/>
            <person name="Onodera C.S."/>
            <person name="Deng J.M."/>
            <person name="Akiyama K."/>
            <person name="Ansari Y."/>
            <person name="Arakawa T."/>
            <person name="Banh J."/>
            <person name="Banno F."/>
            <person name="Bowser L."/>
            <person name="Brooks S.Y."/>
            <person name="Carninci P."/>
            <person name="Chao Q."/>
            <person name="Choy N."/>
            <person name="Enju A."/>
            <person name="Goldsmith A.D."/>
            <person name="Gurjal M."/>
            <person name="Hansen N.F."/>
            <person name="Hayashizaki Y."/>
            <person name="Johnson-Hopson C."/>
            <person name="Hsuan V.W."/>
            <person name="Iida K."/>
            <person name="Karnes M."/>
            <person name="Khan S."/>
            <person name="Koesema E."/>
            <person name="Ishida J."/>
            <person name="Jiang P.X."/>
            <person name="Jones T."/>
            <person name="Kawai J."/>
            <person name="Kamiya A."/>
            <person name="Meyers C."/>
            <person name="Nakajima M."/>
            <person name="Narusaka M."/>
            <person name="Seki M."/>
            <person name="Sakurai T."/>
            <person name="Satou M."/>
            <person name="Tamse R."/>
            <person name="Vaysberg M."/>
            <person name="Wallender E.K."/>
            <person name="Wong C."/>
            <person name="Yamamura Y."/>
            <person name="Yuan S."/>
            <person name="Shinozaki K."/>
            <person name="Davis R.W."/>
            <person name="Theologis A."/>
            <person name="Ecker J.R."/>
        </authorList>
    </citation>
    <scope>NUCLEOTIDE SEQUENCE [LARGE SCALE MRNA]</scope>
    <source>
        <strain>cv. Columbia</strain>
    </source>
</reference>
<reference key="6">
    <citation type="journal article" date="1998" name="Plant J.">
        <title>Towards functional characterisation of the members of the R2R3-MYB gene family from Arabidopsis thaliana.</title>
        <authorList>
            <person name="Kranz H.D."/>
            <person name="Denekamp M."/>
            <person name="Greco R."/>
            <person name="Jin H.-L."/>
            <person name="Leyva A."/>
            <person name="Meissner R.C."/>
            <person name="Petroni K."/>
            <person name="Urzainqui A."/>
            <person name="Bevan M."/>
            <person name="Martin C."/>
            <person name="Smeekens S."/>
            <person name="Tonelli C."/>
            <person name="Paz-Ares J."/>
            <person name="Weisshaar B."/>
        </authorList>
    </citation>
    <scope>NUCLEOTIDE SEQUENCE [MRNA] OF 77-352</scope>
    <scope>NOMENCLATURE</scope>
    <source>
        <strain>cv. Columbia</strain>
    </source>
</reference>
<reference key="7">
    <citation type="journal article" date="2006" name="Plant Mol. Biol.">
        <title>The MYB transcription factor superfamily of Arabidopsis: expression analysis and phylogenetic comparison with the rice MYB family.</title>
        <authorList>
            <person name="Chen Y."/>
            <person name="Yang X."/>
            <person name="He K."/>
            <person name="Liu M."/>
            <person name="Li J."/>
            <person name="Gao Z."/>
            <person name="Lin Z."/>
            <person name="Zhang Y."/>
            <person name="Wang X."/>
            <person name="Qiu X."/>
            <person name="Shen Y."/>
            <person name="Zhang L."/>
            <person name="Deng X."/>
            <person name="Luo J."/>
            <person name="Deng X.-W."/>
            <person name="Chen Z."/>
            <person name="Gu H."/>
            <person name="Qu L.-J."/>
        </authorList>
    </citation>
    <scope>GENE FAMILY</scope>
</reference>
<sequence>MGRHSCCFKQKLRKGLWSPEEDEKLLNYITRHGHGCWSSVPKLAGLQRCGKSCRLRWINYLRPDLKRGAFSQDEESLIIELHAALGNRWSQIATRLPGRTDNEIKNFWNSCLKKKLRRKGIDPTTHKPLITNELQSLNVIDQKLTSSEVVKSTGSINNLHDQSMVVSSQQGPWWFPANTTTTNQNSAFCFSSSNTTTVSDQIVSLISSMSTSSSPTPMTSNFSPAPNNWEQLNYCNTVPSQSNSIYSAFFGNQYTEASQTMNNNNPLVDQHHHHQDMKSWASEILHYTEHNQSSETVIEAEVKPDIANYYWRSASSSSSPNQEAATLLHDANVEVYGKNLQKLNNMVFDQSL</sequence>
<keyword id="KW-0010">Activator</keyword>
<keyword id="KW-0238">DNA-binding</keyword>
<keyword id="KW-0539">Nucleus</keyword>
<keyword id="KW-1185">Reference proteome</keyword>
<keyword id="KW-0677">Repeat</keyword>
<keyword id="KW-0804">Transcription</keyword>
<keyword id="KW-0805">Transcription regulation</keyword>
<name>MYB86_ARATH</name>
<protein>
    <recommendedName>
        <fullName>Transcription factor MYB86</fullName>
    </recommendedName>
    <alternativeName>
        <fullName>Myb homolog 4</fullName>
        <shortName>AtMyb4</shortName>
    </alternativeName>
    <alternativeName>
        <fullName>Myb-related protein 86</fullName>
        <shortName>AtMYB86</shortName>
    </alternativeName>
</protein>
<accession>Q8LPH6</accession>
<accession>O22685</accession>
<accession>O65249</accession>
<accession>Q9SBF4</accession>
<feature type="chain" id="PRO_0000197077" description="Transcription factor MYB86">
    <location>
        <begin position="1"/>
        <end position="352"/>
    </location>
</feature>
<feature type="domain" description="HTH myb-type 1" evidence="2">
    <location>
        <begin position="9"/>
        <end position="61"/>
    </location>
</feature>
<feature type="domain" description="HTH myb-type 2" evidence="2">
    <location>
        <begin position="62"/>
        <end position="116"/>
    </location>
</feature>
<feature type="DNA-binding region" description="H-T-H motif" evidence="2">
    <location>
        <begin position="37"/>
        <end position="61"/>
    </location>
</feature>
<feature type="DNA-binding region" description="H-T-H motif" evidence="2">
    <location>
        <begin position="89"/>
        <end position="112"/>
    </location>
</feature>
<feature type="sequence conflict" description="In Ref. 1; BAA21619." evidence="4" ref="1">
    <original>Y</original>
    <variation>F</variation>
    <location>
        <position position="246"/>
    </location>
</feature>
<feature type="sequence conflict" description="In Ref. 6." evidence="4" ref="6">
    <original>N</original>
    <variation>S</variation>
    <location>
        <position position="291"/>
    </location>
</feature>
<feature type="sequence conflict" description="In Ref. 1; BAA21619." evidence="4" ref="1">
    <original>M</original>
    <variation>T</variation>
    <location>
        <position position="346"/>
    </location>
</feature>
<organism>
    <name type="scientific">Arabidopsis thaliana</name>
    <name type="common">Mouse-ear cress</name>
    <dbReference type="NCBI Taxonomy" id="3702"/>
    <lineage>
        <taxon>Eukaryota</taxon>
        <taxon>Viridiplantae</taxon>
        <taxon>Streptophyta</taxon>
        <taxon>Embryophyta</taxon>
        <taxon>Tracheophyta</taxon>
        <taxon>Spermatophyta</taxon>
        <taxon>Magnoliopsida</taxon>
        <taxon>eudicotyledons</taxon>
        <taxon>Gunneridae</taxon>
        <taxon>Pentapetalae</taxon>
        <taxon>rosids</taxon>
        <taxon>malvids</taxon>
        <taxon>Brassicales</taxon>
        <taxon>Brassicaceae</taxon>
        <taxon>Camelineae</taxon>
        <taxon>Arabidopsis</taxon>
    </lineage>
</organism>
<dbReference type="EMBL" id="AB005889">
    <property type="protein sequence ID" value="BAA21619.1"/>
    <property type="molecule type" value="mRNA"/>
</dbReference>
<dbReference type="EMBL" id="AF058914">
    <property type="protein sequence ID" value="AAC13592.1"/>
    <property type="status" value="ALT_SEQ"/>
    <property type="molecule type" value="Genomic_DNA"/>
</dbReference>
<dbReference type="EMBL" id="CP002688">
    <property type="protein sequence ID" value="AED93580.1"/>
    <property type="molecule type" value="Genomic_DNA"/>
</dbReference>
<dbReference type="EMBL" id="AY519629">
    <property type="protein sequence ID" value="AAS10099.1"/>
    <property type="molecule type" value="mRNA"/>
</dbReference>
<dbReference type="EMBL" id="AY099777">
    <property type="protein sequence ID" value="AAM20628.1"/>
    <property type="molecule type" value="mRNA"/>
</dbReference>
<dbReference type="EMBL" id="BT008740">
    <property type="protein sequence ID" value="AAP42753.1"/>
    <property type="molecule type" value="mRNA"/>
</dbReference>
<dbReference type="EMBL" id="AF062913">
    <property type="protein sequence ID" value="AAC83635.1"/>
    <property type="molecule type" value="mRNA"/>
</dbReference>
<dbReference type="PIR" id="T01196">
    <property type="entry name" value="T01196"/>
</dbReference>
<dbReference type="PIR" id="T51685">
    <property type="entry name" value="T51685"/>
</dbReference>
<dbReference type="RefSeq" id="NP_850879.1">
    <property type="nucleotide sequence ID" value="NM_180548.4"/>
</dbReference>
<dbReference type="SMR" id="Q8LPH6"/>
<dbReference type="BioGRID" id="17998">
    <property type="interactions" value="11"/>
</dbReference>
<dbReference type="FunCoup" id="Q8LPH6">
    <property type="interactions" value="2"/>
</dbReference>
<dbReference type="IntAct" id="Q8LPH6">
    <property type="interactions" value="9"/>
</dbReference>
<dbReference type="STRING" id="3702.Q8LPH6"/>
<dbReference type="GlyGen" id="Q8LPH6">
    <property type="glycosylation" value="1 site"/>
</dbReference>
<dbReference type="PaxDb" id="3702-AT5G26660.1"/>
<dbReference type="ProteomicsDB" id="251372"/>
<dbReference type="EnsemblPlants" id="AT5G26660.1">
    <property type="protein sequence ID" value="AT5G26660.1"/>
    <property type="gene ID" value="AT5G26660"/>
</dbReference>
<dbReference type="GeneID" id="832723"/>
<dbReference type="Gramene" id="AT5G26660.1">
    <property type="protein sequence ID" value="AT5G26660.1"/>
    <property type="gene ID" value="AT5G26660"/>
</dbReference>
<dbReference type="KEGG" id="ath:AT5G26660"/>
<dbReference type="Araport" id="AT5G26660"/>
<dbReference type="TAIR" id="AT5G26660">
    <property type="gene designation" value="MYB86"/>
</dbReference>
<dbReference type="eggNOG" id="KOG0048">
    <property type="taxonomic scope" value="Eukaryota"/>
</dbReference>
<dbReference type="HOGENOM" id="CLU_028567_15_0_1"/>
<dbReference type="InParanoid" id="Q8LPH6"/>
<dbReference type="OMA" id="SPWWYPA"/>
<dbReference type="PhylomeDB" id="Q8LPH6"/>
<dbReference type="PRO" id="PR:Q8LPH6"/>
<dbReference type="Proteomes" id="UP000006548">
    <property type="component" value="Chromosome 5"/>
</dbReference>
<dbReference type="ExpressionAtlas" id="Q8LPH6">
    <property type="expression patterns" value="baseline and differential"/>
</dbReference>
<dbReference type="GO" id="GO:0005634">
    <property type="term" value="C:nucleus"/>
    <property type="evidence" value="ECO:0007669"/>
    <property type="project" value="UniProtKB-SubCell"/>
</dbReference>
<dbReference type="GO" id="GO:0000976">
    <property type="term" value="F:transcription cis-regulatory region binding"/>
    <property type="evidence" value="ECO:0000353"/>
    <property type="project" value="TAIR"/>
</dbReference>
<dbReference type="CDD" id="cd00167">
    <property type="entry name" value="SANT"/>
    <property type="match status" value="2"/>
</dbReference>
<dbReference type="FunFam" id="1.10.10.60:FF:000394">
    <property type="entry name" value="MYB transcription factor"/>
    <property type="match status" value="1"/>
</dbReference>
<dbReference type="FunFam" id="1.10.10.60:FF:000047">
    <property type="entry name" value="Myb transcription factor"/>
    <property type="match status" value="1"/>
</dbReference>
<dbReference type="Gene3D" id="1.10.10.60">
    <property type="entry name" value="Homeodomain-like"/>
    <property type="match status" value="2"/>
</dbReference>
<dbReference type="InterPro" id="IPR009057">
    <property type="entry name" value="Homeodomain-like_sf"/>
</dbReference>
<dbReference type="InterPro" id="IPR017930">
    <property type="entry name" value="Myb_dom"/>
</dbReference>
<dbReference type="InterPro" id="IPR051953">
    <property type="entry name" value="Plant_SW-associated_TFs"/>
</dbReference>
<dbReference type="InterPro" id="IPR001005">
    <property type="entry name" value="SANT/Myb"/>
</dbReference>
<dbReference type="PANTHER" id="PTHR47997">
    <property type="entry name" value="MYB DOMAIN PROTEIN 55"/>
    <property type="match status" value="1"/>
</dbReference>
<dbReference type="PANTHER" id="PTHR47997:SF38">
    <property type="entry name" value="TRANSCRIPTION FACTOR MYB86"/>
    <property type="match status" value="1"/>
</dbReference>
<dbReference type="Pfam" id="PF00249">
    <property type="entry name" value="Myb_DNA-binding"/>
    <property type="match status" value="2"/>
</dbReference>
<dbReference type="SMART" id="SM00717">
    <property type="entry name" value="SANT"/>
    <property type="match status" value="2"/>
</dbReference>
<dbReference type="SUPFAM" id="SSF46689">
    <property type="entry name" value="Homeodomain-like"/>
    <property type="match status" value="1"/>
</dbReference>
<dbReference type="PROSITE" id="PS51294">
    <property type="entry name" value="HTH_MYB"/>
    <property type="match status" value="2"/>
</dbReference>
<comment type="function">
    <text evidence="1">Probable transcription factor.</text>
</comment>
<comment type="subcellular location">
    <subcellularLocation>
        <location evidence="4">Nucleus</location>
    </subcellularLocation>
</comment>
<comment type="tissue specificity">
    <text evidence="3">Expressed in stems, flowers and seeds. Weakly expressed in leaves and roots.</text>
</comment>
<comment type="sequence caution" evidence="4">
    <conflict type="erroneous gene model prediction">
        <sequence resource="EMBL-CDS" id="AAC13592"/>
    </conflict>
</comment>
<proteinExistence type="evidence at transcript level"/>